<sequence length="156" mass="18116">MRCPFCHSDNDKVQDSRTAEAGYVVRRKRLCQTCQRRFTTLEQIDALNVRVVKSDETREPFDREKIKRGIERACSKRAVTSDEIEKTVQKIEEAIYAEFDMEIPTATIGEVVLRKLATLDEVAYIRFASVYRDFDDAKDFLQIVSNLQRDAETEGR</sequence>
<name>NRDR_RHOBA</name>
<gene>
    <name evidence="1" type="primary">nrdR</name>
    <name type="ordered locus">RB8049</name>
</gene>
<evidence type="ECO:0000255" key="1">
    <source>
        <dbReference type="HAMAP-Rule" id="MF_00440"/>
    </source>
</evidence>
<protein>
    <recommendedName>
        <fullName evidence="1">Transcriptional repressor NrdR</fullName>
    </recommendedName>
</protein>
<organism>
    <name type="scientific">Rhodopirellula baltica (strain DSM 10527 / NCIMB 13988 / SH1)</name>
    <dbReference type="NCBI Taxonomy" id="243090"/>
    <lineage>
        <taxon>Bacteria</taxon>
        <taxon>Pseudomonadati</taxon>
        <taxon>Planctomycetota</taxon>
        <taxon>Planctomycetia</taxon>
        <taxon>Pirellulales</taxon>
        <taxon>Pirellulaceae</taxon>
        <taxon>Rhodopirellula</taxon>
    </lineage>
</organism>
<feature type="chain" id="PRO_0000182340" description="Transcriptional repressor NrdR">
    <location>
        <begin position="1"/>
        <end position="156"/>
    </location>
</feature>
<feature type="domain" description="ATP-cone" evidence="1">
    <location>
        <begin position="49"/>
        <end position="139"/>
    </location>
</feature>
<feature type="zinc finger region" evidence="1">
    <location>
        <begin position="3"/>
        <end position="34"/>
    </location>
</feature>
<dbReference type="EMBL" id="BX294147">
    <property type="protein sequence ID" value="CAD78437.1"/>
    <property type="molecule type" value="Genomic_DNA"/>
</dbReference>
<dbReference type="RefSeq" id="NP_868159.1">
    <property type="nucleotide sequence ID" value="NC_005027.1"/>
</dbReference>
<dbReference type="RefSeq" id="WP_007327006.1">
    <property type="nucleotide sequence ID" value="NC_005027.1"/>
</dbReference>
<dbReference type="SMR" id="Q7UG92"/>
<dbReference type="FunCoup" id="Q7UG92">
    <property type="interactions" value="214"/>
</dbReference>
<dbReference type="STRING" id="243090.RB8049"/>
<dbReference type="EnsemblBacteria" id="CAD78437">
    <property type="protein sequence ID" value="CAD78437"/>
    <property type="gene ID" value="RB8049"/>
</dbReference>
<dbReference type="KEGG" id="rba:RB8049"/>
<dbReference type="PATRIC" id="fig|243090.15.peg.3886"/>
<dbReference type="eggNOG" id="COG1327">
    <property type="taxonomic scope" value="Bacteria"/>
</dbReference>
<dbReference type="HOGENOM" id="CLU_108412_0_0_0"/>
<dbReference type="InParanoid" id="Q7UG92"/>
<dbReference type="OrthoDB" id="9807461at2"/>
<dbReference type="Proteomes" id="UP000001025">
    <property type="component" value="Chromosome"/>
</dbReference>
<dbReference type="GO" id="GO:0005524">
    <property type="term" value="F:ATP binding"/>
    <property type="evidence" value="ECO:0007669"/>
    <property type="project" value="UniProtKB-KW"/>
</dbReference>
<dbReference type="GO" id="GO:0003690">
    <property type="term" value="F:double-stranded DNA binding"/>
    <property type="evidence" value="ECO:0000318"/>
    <property type="project" value="GO_Central"/>
</dbReference>
<dbReference type="GO" id="GO:0008270">
    <property type="term" value="F:zinc ion binding"/>
    <property type="evidence" value="ECO:0007669"/>
    <property type="project" value="UniProtKB-UniRule"/>
</dbReference>
<dbReference type="GO" id="GO:0045892">
    <property type="term" value="P:negative regulation of DNA-templated transcription"/>
    <property type="evidence" value="ECO:0000318"/>
    <property type="project" value="GO_Central"/>
</dbReference>
<dbReference type="HAMAP" id="MF_00440">
    <property type="entry name" value="NrdR"/>
    <property type="match status" value="1"/>
</dbReference>
<dbReference type="InterPro" id="IPR005144">
    <property type="entry name" value="ATP-cone_dom"/>
</dbReference>
<dbReference type="InterPro" id="IPR055173">
    <property type="entry name" value="NrdR-like_N"/>
</dbReference>
<dbReference type="InterPro" id="IPR003796">
    <property type="entry name" value="RNR_NrdR-like"/>
</dbReference>
<dbReference type="NCBIfam" id="TIGR00244">
    <property type="entry name" value="transcriptional regulator NrdR"/>
    <property type="match status" value="1"/>
</dbReference>
<dbReference type="PANTHER" id="PTHR30455">
    <property type="entry name" value="TRANSCRIPTIONAL REPRESSOR NRDR"/>
    <property type="match status" value="1"/>
</dbReference>
<dbReference type="PANTHER" id="PTHR30455:SF2">
    <property type="entry name" value="TRANSCRIPTIONAL REPRESSOR NRDR"/>
    <property type="match status" value="1"/>
</dbReference>
<dbReference type="Pfam" id="PF03477">
    <property type="entry name" value="ATP-cone"/>
    <property type="match status" value="1"/>
</dbReference>
<dbReference type="Pfam" id="PF22811">
    <property type="entry name" value="Zn_ribbon_NrdR"/>
    <property type="match status" value="1"/>
</dbReference>
<dbReference type="PROSITE" id="PS51161">
    <property type="entry name" value="ATP_CONE"/>
    <property type="match status" value="1"/>
</dbReference>
<accession>Q7UG92</accession>
<comment type="function">
    <text evidence="1">Negatively regulates transcription of bacterial ribonucleotide reductase nrd genes and operons by binding to NrdR-boxes.</text>
</comment>
<comment type="cofactor">
    <cofactor evidence="1">
        <name>Zn(2+)</name>
        <dbReference type="ChEBI" id="CHEBI:29105"/>
    </cofactor>
    <text evidence="1">Binds 1 zinc ion.</text>
</comment>
<comment type="similarity">
    <text evidence="1">Belongs to the NrdR family.</text>
</comment>
<keyword id="KW-0067">ATP-binding</keyword>
<keyword id="KW-0238">DNA-binding</keyword>
<keyword id="KW-0479">Metal-binding</keyword>
<keyword id="KW-0547">Nucleotide-binding</keyword>
<keyword id="KW-1185">Reference proteome</keyword>
<keyword id="KW-0678">Repressor</keyword>
<keyword id="KW-0804">Transcription</keyword>
<keyword id="KW-0805">Transcription regulation</keyword>
<keyword id="KW-0862">Zinc</keyword>
<keyword id="KW-0863">Zinc-finger</keyword>
<reference key="1">
    <citation type="journal article" date="2003" name="Proc. Natl. Acad. Sci. U.S.A.">
        <title>Complete genome sequence of the marine planctomycete Pirellula sp. strain 1.</title>
        <authorList>
            <person name="Gloeckner F.O."/>
            <person name="Kube M."/>
            <person name="Bauer M."/>
            <person name="Teeling H."/>
            <person name="Lombardot T."/>
            <person name="Ludwig W."/>
            <person name="Gade D."/>
            <person name="Beck A."/>
            <person name="Borzym K."/>
            <person name="Heitmann K."/>
            <person name="Rabus R."/>
            <person name="Schlesner H."/>
            <person name="Amann R."/>
            <person name="Reinhardt R."/>
        </authorList>
    </citation>
    <scope>NUCLEOTIDE SEQUENCE [LARGE SCALE GENOMIC DNA]</scope>
    <source>
        <strain>DSM 10527 / NCIMB 13988 / SH1</strain>
    </source>
</reference>
<proteinExistence type="inferred from homology"/>